<dbReference type="EC" id="3.4.23.36" evidence="1"/>
<dbReference type="EMBL" id="FM242711">
    <property type="protein sequence ID" value="CAS05618.1"/>
    <property type="molecule type" value="Genomic_DNA"/>
</dbReference>
<dbReference type="RefSeq" id="WP_003726602.1">
    <property type="nucleotide sequence ID" value="NC_012488.1"/>
</dbReference>
<dbReference type="SMR" id="C1KWE3"/>
<dbReference type="KEGG" id="lmc:Lm4b_01860"/>
<dbReference type="HOGENOM" id="CLU_083252_3_0_9"/>
<dbReference type="UniPathway" id="UPA00665"/>
<dbReference type="GO" id="GO:0005886">
    <property type="term" value="C:plasma membrane"/>
    <property type="evidence" value="ECO:0007669"/>
    <property type="project" value="UniProtKB-SubCell"/>
</dbReference>
<dbReference type="GO" id="GO:0004190">
    <property type="term" value="F:aspartic-type endopeptidase activity"/>
    <property type="evidence" value="ECO:0007669"/>
    <property type="project" value="UniProtKB-UniRule"/>
</dbReference>
<dbReference type="GO" id="GO:0006508">
    <property type="term" value="P:proteolysis"/>
    <property type="evidence" value="ECO:0007669"/>
    <property type="project" value="UniProtKB-KW"/>
</dbReference>
<dbReference type="HAMAP" id="MF_00161">
    <property type="entry name" value="LspA"/>
    <property type="match status" value="1"/>
</dbReference>
<dbReference type="InterPro" id="IPR001872">
    <property type="entry name" value="Peptidase_A8"/>
</dbReference>
<dbReference type="NCBIfam" id="TIGR00077">
    <property type="entry name" value="lspA"/>
    <property type="match status" value="1"/>
</dbReference>
<dbReference type="PANTHER" id="PTHR33695">
    <property type="entry name" value="LIPOPROTEIN SIGNAL PEPTIDASE"/>
    <property type="match status" value="1"/>
</dbReference>
<dbReference type="PANTHER" id="PTHR33695:SF1">
    <property type="entry name" value="LIPOPROTEIN SIGNAL PEPTIDASE"/>
    <property type="match status" value="1"/>
</dbReference>
<dbReference type="Pfam" id="PF01252">
    <property type="entry name" value="Peptidase_A8"/>
    <property type="match status" value="1"/>
</dbReference>
<dbReference type="PRINTS" id="PR00781">
    <property type="entry name" value="LIPOSIGPTASE"/>
</dbReference>
<dbReference type="PROSITE" id="PS00855">
    <property type="entry name" value="SPASE_II"/>
    <property type="match status" value="1"/>
</dbReference>
<gene>
    <name evidence="1" type="primary">lspA</name>
    <name type="ordered locus">Lm4b_01860</name>
</gene>
<keyword id="KW-0064">Aspartyl protease</keyword>
<keyword id="KW-1003">Cell membrane</keyword>
<keyword id="KW-0378">Hydrolase</keyword>
<keyword id="KW-0472">Membrane</keyword>
<keyword id="KW-0645">Protease</keyword>
<keyword id="KW-0812">Transmembrane</keyword>
<keyword id="KW-1133">Transmembrane helix</keyword>
<proteinExistence type="inferred from homology"/>
<accession>C1KWE3</accession>
<sequence>MYYYLITLAVIALDQLTKWIVVQNMEIGQKIEVIPGFLYWTSYRNDGAAWSILEGHMWFFYLITVVVIGIIIYIMQKYAKGKRLFSISLAFILGGAIGNFIDRVLHQEVVDFVQTVWGNYYFPIFNVADAALSVGVVLMLVYVFVDDRKTKGIK</sequence>
<organism>
    <name type="scientific">Listeria monocytogenes serotype 4b (strain CLIP80459)</name>
    <dbReference type="NCBI Taxonomy" id="568819"/>
    <lineage>
        <taxon>Bacteria</taxon>
        <taxon>Bacillati</taxon>
        <taxon>Bacillota</taxon>
        <taxon>Bacilli</taxon>
        <taxon>Bacillales</taxon>
        <taxon>Listeriaceae</taxon>
        <taxon>Listeria</taxon>
    </lineage>
</organism>
<protein>
    <recommendedName>
        <fullName evidence="1">Lipoprotein signal peptidase</fullName>
        <ecNumber evidence="1">3.4.23.36</ecNumber>
    </recommendedName>
    <alternativeName>
        <fullName evidence="1">Prolipoprotein signal peptidase</fullName>
    </alternativeName>
    <alternativeName>
        <fullName evidence="1">Signal peptidase II</fullName>
        <shortName evidence="1">SPase II</shortName>
    </alternativeName>
</protein>
<reference key="1">
    <citation type="journal article" date="2012" name="BMC Genomics">
        <title>Comparative genomics and transcriptomics of lineages I, II, and III strains of Listeria monocytogenes.</title>
        <authorList>
            <person name="Hain T."/>
            <person name="Ghai R."/>
            <person name="Billion A."/>
            <person name="Kuenne C.T."/>
            <person name="Steinweg C."/>
            <person name="Izar B."/>
            <person name="Mohamed W."/>
            <person name="Mraheil M."/>
            <person name="Domann E."/>
            <person name="Schaffrath S."/>
            <person name="Karst U."/>
            <person name="Goesmann A."/>
            <person name="Oehm S."/>
            <person name="Puhler A."/>
            <person name="Merkl R."/>
            <person name="Vorwerk S."/>
            <person name="Glaser P."/>
            <person name="Garrido P."/>
            <person name="Rusniok C."/>
            <person name="Buchrieser C."/>
            <person name="Goebel W."/>
            <person name="Chakraborty T."/>
        </authorList>
    </citation>
    <scope>NUCLEOTIDE SEQUENCE [LARGE SCALE GENOMIC DNA]</scope>
    <source>
        <strain>CLIP80459</strain>
    </source>
</reference>
<comment type="function">
    <text evidence="1">This protein specifically catalyzes the removal of signal peptides from prolipoproteins.</text>
</comment>
<comment type="catalytic activity">
    <reaction evidence="1">
        <text>Release of signal peptides from bacterial membrane prolipoproteins. Hydrolyzes -Xaa-Yaa-Zaa-|-(S,diacylglyceryl)Cys-, in which Xaa is hydrophobic (preferably Leu), and Yaa (Ala or Ser) and Zaa (Gly or Ala) have small, neutral side chains.</text>
        <dbReference type="EC" id="3.4.23.36"/>
    </reaction>
</comment>
<comment type="pathway">
    <text evidence="1">Protein modification; lipoprotein biosynthesis (signal peptide cleavage).</text>
</comment>
<comment type="subcellular location">
    <subcellularLocation>
        <location evidence="1">Cell membrane</location>
        <topology evidence="1">Multi-pass membrane protein</topology>
    </subcellularLocation>
</comment>
<comment type="similarity">
    <text evidence="1">Belongs to the peptidase A8 family.</text>
</comment>
<evidence type="ECO:0000255" key="1">
    <source>
        <dbReference type="HAMAP-Rule" id="MF_00161"/>
    </source>
</evidence>
<feature type="chain" id="PRO_1000203594" description="Lipoprotein signal peptidase">
    <location>
        <begin position="1"/>
        <end position="154"/>
    </location>
</feature>
<feature type="transmembrane region" description="Helical" evidence="1">
    <location>
        <begin position="55"/>
        <end position="75"/>
    </location>
</feature>
<feature type="transmembrane region" description="Helical" evidence="1">
    <location>
        <begin position="84"/>
        <end position="104"/>
    </location>
</feature>
<feature type="transmembrane region" description="Helical" evidence="1">
    <location>
        <begin position="124"/>
        <end position="144"/>
    </location>
</feature>
<feature type="active site" evidence="1">
    <location>
        <position position="111"/>
    </location>
</feature>
<feature type="active site" evidence="1">
    <location>
        <position position="129"/>
    </location>
</feature>
<name>LSPA_LISMC</name>